<comment type="function">
    <text evidence="1">The 26S proteasome is involved in the ATP-dependent degradation of ubiquitinated proteins. The regulatory (or ATPase) complex confers ATP dependency and substrate specificity to the 26S complex (By similarity).</text>
</comment>
<comment type="interaction">
    <interactant intactId="EBI-13905">
        <id>P33298</id>
    </interactant>
    <interactant intactId="EBI-14028">
        <id>P50086</id>
        <label>NAS6</label>
    </interactant>
    <organismsDiffer>false</organismsDiffer>
    <experiments>12</experiments>
</comment>
<comment type="interaction">
    <interactant intactId="EBI-13905">
        <id>P33298</id>
    </interactant>
    <interactant intactId="EBI-14668">
        <id>P32628</id>
        <label>RAD23</label>
    </interactant>
    <organismsDiffer>false</organismsDiffer>
    <experiments>3</experiments>
</comment>
<comment type="interaction">
    <interactant intactId="EBI-13905">
        <id>P33298</id>
    </interactant>
    <interactant intactId="EBI-11219">
        <id>P43588</id>
        <label>RPN11</label>
    </interactant>
    <organismsDiffer>false</organismsDiffer>
    <experiments>4</experiments>
</comment>
<comment type="interaction">
    <interactant intactId="EBI-13905">
        <id>P33298</id>
    </interactant>
    <interactant intactId="EBI-15953">
        <id>P32496</id>
        <label>RPN12</label>
    </interactant>
    <organismsDiffer>false</organismsDiffer>
    <experiments>4</experiments>
</comment>
<comment type="interaction">
    <interactant intactId="EBI-13905">
        <id>P33298</id>
    </interactant>
    <interactant intactId="EBI-15944">
        <id>Q04062</id>
        <label>RPN9</label>
    </interactant>
    <organismsDiffer>false</organismsDiffer>
    <experiments>4</experiments>
</comment>
<comment type="interaction">
    <interactant intactId="EBI-13905">
        <id>P33298</id>
    </interactant>
    <interactant intactId="EBI-13910">
        <id>P33299</id>
        <label>RPT1</label>
    </interactant>
    <organismsDiffer>false</organismsDiffer>
    <experiments>7</experiments>
</comment>
<comment type="interaction">
    <interactant intactId="EBI-13905">
        <id>P33298</id>
    </interactant>
    <interactant intactId="EBI-13905">
        <id>P33298</id>
        <label>RPT3</label>
    </interactant>
    <organismsDiffer>false</organismsDiffer>
    <experiments>3</experiments>
</comment>
<comment type="interaction">
    <interactant intactId="EBI-13905">
        <id>P33298</id>
    </interactant>
    <interactant intactId="EBI-18520">
        <id>P53549</id>
        <label>RPT4</label>
    </interactant>
    <organismsDiffer>false</organismsDiffer>
    <experiments>6</experiments>
</comment>
<comment type="interaction">
    <interactant intactId="EBI-13905">
        <id>P33298</id>
    </interactant>
    <interactant intactId="EBI-13920">
        <id>P33297</id>
        <label>RPT5</label>
    </interactant>
    <organismsDiffer>false</organismsDiffer>
    <experiments>7</experiments>
</comment>
<comment type="interaction">
    <interactant intactId="EBI-13905">
        <id>P33298</id>
    </interactant>
    <interactant intactId="EBI-13914">
        <id>Q01939</id>
        <label>RPT6</label>
    </interactant>
    <organismsDiffer>false</organismsDiffer>
    <experiments>7</experiments>
</comment>
<comment type="subcellular location">
    <subcellularLocation>
        <location evidence="4">Cytoplasm</location>
    </subcellularLocation>
    <subcellularLocation>
        <location evidence="4">Nucleus</location>
    </subcellularLocation>
</comment>
<comment type="PTM">
    <text evidence="3">N-acetylated by NAT3.</text>
</comment>
<comment type="similarity">
    <text evidence="4">Belongs to the AAA ATPase family.</text>
</comment>
<feature type="chain" id="PRO_0000084697" description="26S proteasome regulatory subunit 6B homolog">
    <location>
        <begin position="1"/>
        <end position="428"/>
    </location>
</feature>
<feature type="binding site" evidence="2">
    <location>
        <begin position="213"/>
        <end position="220"/>
    </location>
    <ligand>
        <name>ATP</name>
        <dbReference type="ChEBI" id="CHEBI:30616"/>
    </ligand>
</feature>
<feature type="modified residue" description="N-acetylmethionine" evidence="3">
    <location>
        <position position="1"/>
    </location>
</feature>
<feature type="cross-link" description="Glycyl lysine isopeptide (Lys-Gly) (interchain with G-Cter in ubiquitin)" evidence="5">
    <location>
        <position position="280"/>
    </location>
</feature>
<feature type="sequence conflict" description="In Ref. 1; CAA51972 and 2; AAA81916." evidence="4" ref="1 2">
    <original>S</original>
    <variation>Y</variation>
    <location>
        <position position="342"/>
    </location>
</feature>
<feature type="helix" evidence="6">
    <location>
        <begin position="351"/>
        <end position="359"/>
    </location>
</feature>
<feature type="helix" evidence="7">
    <location>
        <begin position="368"/>
        <end position="373"/>
    </location>
</feature>
<feature type="helix" evidence="6">
    <location>
        <begin position="380"/>
        <end position="396"/>
    </location>
</feature>
<feature type="strand" evidence="6">
    <location>
        <begin position="400"/>
        <end position="402"/>
    </location>
</feature>
<feature type="helix" evidence="6">
    <location>
        <begin position="404"/>
        <end position="412"/>
    </location>
</feature>
<dbReference type="EMBL" id="X73570">
    <property type="protein sequence ID" value="CAA51972.1"/>
    <property type="molecule type" value="Genomic_DNA"/>
</dbReference>
<dbReference type="EMBL" id="U06229">
    <property type="protein sequence ID" value="AAA81916.1"/>
    <property type="molecule type" value="Genomic_DNA"/>
</dbReference>
<dbReference type="EMBL" id="U32274">
    <property type="protein sequence ID" value="AAB64836.1"/>
    <property type="molecule type" value="Genomic_DNA"/>
</dbReference>
<dbReference type="EMBL" id="BK006938">
    <property type="protein sequence ID" value="DAA12238.1"/>
    <property type="molecule type" value="Genomic_DNA"/>
</dbReference>
<dbReference type="PIR" id="S69678">
    <property type="entry name" value="S69678"/>
</dbReference>
<dbReference type="RefSeq" id="NP_010682.3">
    <property type="nucleotide sequence ID" value="NM_001180702.3"/>
</dbReference>
<dbReference type="PDB" id="2DZN">
    <property type="method" value="X-ray"/>
    <property type="resolution" value="2.20 A"/>
    <property type="chains" value="B/D/F=348-428"/>
</dbReference>
<dbReference type="PDB" id="2DZO">
    <property type="method" value="X-ray"/>
    <property type="resolution" value="3.00 A"/>
    <property type="chains" value="B/D=348-428"/>
</dbReference>
<dbReference type="PDB" id="3JCO">
    <property type="method" value="EM"/>
    <property type="resolution" value="4.80 A"/>
    <property type="chains" value="K=1-428"/>
</dbReference>
<dbReference type="PDB" id="3JCP">
    <property type="method" value="EM"/>
    <property type="resolution" value="4.60 A"/>
    <property type="chains" value="K=1-428"/>
</dbReference>
<dbReference type="PDB" id="4CR2">
    <property type="method" value="EM"/>
    <property type="resolution" value="7.70 A"/>
    <property type="chains" value="K=1-428"/>
</dbReference>
<dbReference type="PDB" id="4CR3">
    <property type="method" value="EM"/>
    <property type="resolution" value="9.30 A"/>
    <property type="chains" value="K=1-428"/>
</dbReference>
<dbReference type="PDB" id="4CR4">
    <property type="method" value="EM"/>
    <property type="resolution" value="8.80 A"/>
    <property type="chains" value="K=1-428"/>
</dbReference>
<dbReference type="PDB" id="5A5B">
    <property type="method" value="EM"/>
    <property type="resolution" value="9.50 A"/>
    <property type="chains" value="K=1-428"/>
</dbReference>
<dbReference type="PDB" id="5MP9">
    <property type="method" value="EM"/>
    <property type="resolution" value="4.10 A"/>
    <property type="chains" value="K=1-428"/>
</dbReference>
<dbReference type="PDB" id="5MPA">
    <property type="method" value="EM"/>
    <property type="resolution" value="4.50 A"/>
    <property type="chains" value="K=1-428"/>
</dbReference>
<dbReference type="PDB" id="5MPB">
    <property type="method" value="EM"/>
    <property type="resolution" value="7.80 A"/>
    <property type="chains" value="K=1-428"/>
</dbReference>
<dbReference type="PDB" id="5MPC">
    <property type="method" value="EM"/>
    <property type="resolution" value="7.70 A"/>
    <property type="chains" value="K=1-428"/>
</dbReference>
<dbReference type="PDB" id="5WVI">
    <property type="method" value="EM"/>
    <property type="resolution" value="6.30 A"/>
    <property type="chains" value="K=1-428"/>
</dbReference>
<dbReference type="PDB" id="5WVK">
    <property type="method" value="EM"/>
    <property type="resolution" value="4.20 A"/>
    <property type="chains" value="K=1-428"/>
</dbReference>
<dbReference type="PDB" id="6EF0">
    <property type="method" value="EM"/>
    <property type="resolution" value="4.43 A"/>
    <property type="chains" value="K=157-428"/>
</dbReference>
<dbReference type="PDB" id="6EF1">
    <property type="method" value="EM"/>
    <property type="resolution" value="4.73 A"/>
    <property type="chains" value="K=153-428"/>
</dbReference>
<dbReference type="PDB" id="6EF2">
    <property type="method" value="EM"/>
    <property type="resolution" value="4.27 A"/>
    <property type="chains" value="K=170-428"/>
</dbReference>
<dbReference type="PDB" id="6EF3">
    <property type="method" value="EM"/>
    <property type="resolution" value="4.17 A"/>
    <property type="chains" value="K=1-428"/>
</dbReference>
<dbReference type="PDB" id="6FVT">
    <property type="method" value="EM"/>
    <property type="resolution" value="4.10 A"/>
    <property type="chains" value="K=35-428"/>
</dbReference>
<dbReference type="PDB" id="6FVU">
    <property type="method" value="EM"/>
    <property type="resolution" value="4.50 A"/>
    <property type="chains" value="K=35-428"/>
</dbReference>
<dbReference type="PDB" id="6FVV">
    <property type="method" value="EM"/>
    <property type="resolution" value="5.40 A"/>
    <property type="chains" value="K=35-428"/>
</dbReference>
<dbReference type="PDB" id="6FVW">
    <property type="method" value="EM"/>
    <property type="resolution" value="4.50 A"/>
    <property type="chains" value="K=45-428"/>
</dbReference>
<dbReference type="PDB" id="6FVX">
    <property type="method" value="EM"/>
    <property type="resolution" value="4.90 A"/>
    <property type="chains" value="K=35-428"/>
</dbReference>
<dbReference type="PDB" id="6FVY">
    <property type="method" value="EM"/>
    <property type="resolution" value="6.10 A"/>
    <property type="chains" value="K=35-428"/>
</dbReference>
<dbReference type="PDB" id="6J2C">
    <property type="method" value="EM"/>
    <property type="resolution" value="7.00 A"/>
    <property type="chains" value="K=1-428"/>
</dbReference>
<dbReference type="PDB" id="6J2N">
    <property type="method" value="EM"/>
    <property type="resolution" value="7.50 A"/>
    <property type="chains" value="K=1-428"/>
</dbReference>
<dbReference type="PDB" id="6J2Q">
    <property type="method" value="EM"/>
    <property type="resolution" value="3.80 A"/>
    <property type="chains" value="K=1-428"/>
</dbReference>
<dbReference type="PDB" id="6J2X">
    <property type="method" value="EM"/>
    <property type="resolution" value="3.80 A"/>
    <property type="chains" value="K=1-428"/>
</dbReference>
<dbReference type="PDB" id="6J30">
    <property type="method" value="EM"/>
    <property type="resolution" value="4.50 A"/>
    <property type="chains" value="K=1-428"/>
</dbReference>
<dbReference type="PDB" id="7QO4">
    <property type="method" value="EM"/>
    <property type="resolution" value="7.00 A"/>
    <property type="chains" value="K=1-428"/>
</dbReference>
<dbReference type="PDB" id="7QO5">
    <property type="method" value="EM"/>
    <property type="resolution" value="6.00 A"/>
    <property type="chains" value="K=1-428"/>
</dbReference>
<dbReference type="PDBsum" id="2DZN"/>
<dbReference type="PDBsum" id="2DZO"/>
<dbReference type="PDBsum" id="3JCO"/>
<dbReference type="PDBsum" id="3JCP"/>
<dbReference type="PDBsum" id="4CR2"/>
<dbReference type="PDBsum" id="4CR3"/>
<dbReference type="PDBsum" id="4CR4"/>
<dbReference type="PDBsum" id="5A5B"/>
<dbReference type="PDBsum" id="5MP9"/>
<dbReference type="PDBsum" id="5MPA"/>
<dbReference type="PDBsum" id="5MPB"/>
<dbReference type="PDBsum" id="5MPC"/>
<dbReference type="PDBsum" id="5WVI"/>
<dbReference type="PDBsum" id="5WVK"/>
<dbReference type="PDBsum" id="6EF0"/>
<dbReference type="PDBsum" id="6EF1"/>
<dbReference type="PDBsum" id="6EF2"/>
<dbReference type="PDBsum" id="6EF3"/>
<dbReference type="PDBsum" id="6FVT"/>
<dbReference type="PDBsum" id="6FVU"/>
<dbReference type="PDBsum" id="6FVV"/>
<dbReference type="PDBsum" id="6FVW"/>
<dbReference type="PDBsum" id="6FVX"/>
<dbReference type="PDBsum" id="6FVY"/>
<dbReference type="PDBsum" id="6J2C"/>
<dbReference type="PDBsum" id="6J2N"/>
<dbReference type="PDBsum" id="6J2Q"/>
<dbReference type="PDBsum" id="6J2X"/>
<dbReference type="PDBsum" id="6J30"/>
<dbReference type="PDBsum" id="7QO4"/>
<dbReference type="PDBsum" id="7QO5"/>
<dbReference type="EMDB" id="EMD-14084"/>
<dbReference type="EMDB" id="EMD-3534"/>
<dbReference type="EMDB" id="EMD-3535"/>
<dbReference type="EMDB" id="EMD-3536"/>
<dbReference type="EMDB" id="EMD-3537"/>
<dbReference type="EMDB" id="EMD-4321"/>
<dbReference type="EMDB" id="EMD-4322"/>
<dbReference type="EMDB" id="EMD-4323"/>
<dbReference type="EMDB" id="EMD-4324"/>
<dbReference type="EMDB" id="EMD-6693"/>
<dbReference type="EMDB" id="EMD-6694"/>
<dbReference type="EMDB" id="EMD-9042"/>
<dbReference type="EMDB" id="EMD-9043"/>
<dbReference type="EMDB" id="EMD-9044"/>
<dbReference type="EMDB" id="EMD-9045"/>
<dbReference type="EMDB" id="EMD-9769"/>
<dbReference type="EMDB" id="EMD-9770"/>
<dbReference type="EMDB" id="EMD-9771"/>
<dbReference type="EMDB" id="EMD-9772"/>
<dbReference type="EMDB" id="EMD-9773"/>
<dbReference type="SMR" id="P33298"/>
<dbReference type="BioGRID" id="32456">
    <property type="interactions" value="470"/>
</dbReference>
<dbReference type="ComplexPortal" id="CPX-2262">
    <property type="entry name" value="26S proteasome complex"/>
</dbReference>
<dbReference type="DIP" id="DIP-1587N"/>
<dbReference type="FunCoup" id="P33298">
    <property type="interactions" value="1613"/>
</dbReference>
<dbReference type="IntAct" id="P33298">
    <property type="interactions" value="121"/>
</dbReference>
<dbReference type="MINT" id="P33298"/>
<dbReference type="STRING" id="4932.YDR394W"/>
<dbReference type="iPTMnet" id="P33298"/>
<dbReference type="PaxDb" id="4932-YDR394W"/>
<dbReference type="PeptideAtlas" id="P33298"/>
<dbReference type="EnsemblFungi" id="YDR394W_mRNA">
    <property type="protein sequence ID" value="YDR394W"/>
    <property type="gene ID" value="YDR394W"/>
</dbReference>
<dbReference type="GeneID" id="852003"/>
<dbReference type="KEGG" id="sce:YDR394W"/>
<dbReference type="AGR" id="SGD:S000002802"/>
<dbReference type="SGD" id="S000002802">
    <property type="gene designation" value="RPT3"/>
</dbReference>
<dbReference type="VEuPathDB" id="FungiDB:YDR394W"/>
<dbReference type="eggNOG" id="KOG0727">
    <property type="taxonomic scope" value="Eukaryota"/>
</dbReference>
<dbReference type="GeneTree" id="ENSGT01020000230346"/>
<dbReference type="HOGENOM" id="CLU_000688_2_0_1"/>
<dbReference type="InParanoid" id="P33298"/>
<dbReference type="OMA" id="QDIGGMD"/>
<dbReference type="OrthoDB" id="10255768at2759"/>
<dbReference type="BioCyc" id="YEAST:G3O-29942-MONOMER"/>
<dbReference type="BRENDA" id="5.6.1.5">
    <property type="organism ID" value="984"/>
</dbReference>
<dbReference type="Reactome" id="R-SCE-1236978">
    <property type="pathway name" value="Cross-presentation of soluble exogenous antigens (endosomes)"/>
</dbReference>
<dbReference type="Reactome" id="R-SCE-5668541">
    <property type="pathway name" value="TNFR2 non-canonical NF-kB pathway"/>
</dbReference>
<dbReference type="Reactome" id="R-SCE-5687128">
    <property type="pathway name" value="MAPK6/MAPK4 signaling"/>
</dbReference>
<dbReference type="Reactome" id="R-SCE-5689880">
    <property type="pathway name" value="Ub-specific processing proteases"/>
</dbReference>
<dbReference type="Reactome" id="R-SCE-68949">
    <property type="pathway name" value="Orc1 removal from chromatin"/>
</dbReference>
<dbReference type="Reactome" id="R-SCE-69017">
    <property type="pathway name" value="CDK-mediated phosphorylation and removal of Cdc6"/>
</dbReference>
<dbReference type="Reactome" id="R-SCE-69601">
    <property type="pathway name" value="Ubiquitin Mediated Degradation of Phosphorylated Cdc25A"/>
</dbReference>
<dbReference type="Reactome" id="R-SCE-8854050">
    <property type="pathway name" value="FBXL7 down-regulates AURKA during mitotic entry and in early mitosis"/>
</dbReference>
<dbReference type="Reactome" id="R-SCE-8948751">
    <property type="pathway name" value="Regulation of PTEN stability and activity"/>
</dbReference>
<dbReference type="Reactome" id="R-SCE-8951664">
    <property type="pathway name" value="Neddylation"/>
</dbReference>
<dbReference type="Reactome" id="R-SCE-9755511">
    <property type="pathway name" value="KEAP1-NFE2L2 pathway"/>
</dbReference>
<dbReference type="Reactome" id="R-SCE-983168">
    <property type="pathway name" value="Antigen processing: Ubiquitination &amp; Proteasome degradation"/>
</dbReference>
<dbReference type="Reactome" id="R-SCE-9907900">
    <property type="pathway name" value="Proteasome assembly"/>
</dbReference>
<dbReference type="BioGRID-ORCS" id="852003">
    <property type="hits" value="3 hits in 10 CRISPR screens"/>
</dbReference>
<dbReference type="EvolutionaryTrace" id="P33298"/>
<dbReference type="PRO" id="PR:P33298"/>
<dbReference type="Proteomes" id="UP000002311">
    <property type="component" value="Chromosome IV"/>
</dbReference>
<dbReference type="RNAct" id="P33298">
    <property type="molecule type" value="protein"/>
</dbReference>
<dbReference type="GO" id="GO:0005737">
    <property type="term" value="C:cytoplasm"/>
    <property type="evidence" value="ECO:0007669"/>
    <property type="project" value="UniProtKB-SubCell"/>
</dbReference>
<dbReference type="GO" id="GO:0005634">
    <property type="term" value="C:nucleus"/>
    <property type="evidence" value="ECO:0007669"/>
    <property type="project" value="UniProtKB-SubCell"/>
</dbReference>
<dbReference type="GO" id="GO:0000502">
    <property type="term" value="C:proteasome complex"/>
    <property type="evidence" value="ECO:0000353"/>
    <property type="project" value="ComplexPortal"/>
</dbReference>
<dbReference type="GO" id="GO:0008540">
    <property type="term" value="C:proteasome regulatory particle, base subcomplex"/>
    <property type="evidence" value="ECO:0000314"/>
    <property type="project" value="SGD"/>
</dbReference>
<dbReference type="GO" id="GO:0005524">
    <property type="term" value="F:ATP binding"/>
    <property type="evidence" value="ECO:0007669"/>
    <property type="project" value="UniProtKB-KW"/>
</dbReference>
<dbReference type="GO" id="GO:0016887">
    <property type="term" value="F:ATP hydrolysis activity"/>
    <property type="evidence" value="ECO:0000250"/>
    <property type="project" value="SGD"/>
</dbReference>
<dbReference type="GO" id="GO:0042802">
    <property type="term" value="F:identical protein binding"/>
    <property type="evidence" value="ECO:0000353"/>
    <property type="project" value="IntAct"/>
</dbReference>
<dbReference type="GO" id="GO:0036402">
    <property type="term" value="F:proteasome-activating activity"/>
    <property type="evidence" value="ECO:0000318"/>
    <property type="project" value="GO_Central"/>
</dbReference>
<dbReference type="GO" id="GO:0045899">
    <property type="term" value="P:positive regulation of RNA polymerase II transcription preinitiation complex assembly"/>
    <property type="evidence" value="ECO:0000315"/>
    <property type="project" value="SGD"/>
</dbReference>
<dbReference type="GO" id="GO:0070682">
    <property type="term" value="P:proteasome regulatory particle assembly"/>
    <property type="evidence" value="ECO:0000315"/>
    <property type="project" value="SGD"/>
</dbReference>
<dbReference type="GO" id="GO:0043161">
    <property type="term" value="P:proteasome-mediated ubiquitin-dependent protein catabolic process"/>
    <property type="evidence" value="ECO:0000314"/>
    <property type="project" value="ComplexPortal"/>
</dbReference>
<dbReference type="GO" id="GO:0006511">
    <property type="term" value="P:ubiquitin-dependent protein catabolic process"/>
    <property type="evidence" value="ECO:0000315"/>
    <property type="project" value="SGD"/>
</dbReference>
<dbReference type="FunFam" id="1.10.8.60:FF:000020">
    <property type="entry name" value="26S protease regulatory subunit 6B"/>
    <property type="match status" value="1"/>
</dbReference>
<dbReference type="FunFam" id="2.40.50.140:FF:000046">
    <property type="entry name" value="26S protease regulatory subunit 6B"/>
    <property type="match status" value="1"/>
</dbReference>
<dbReference type="FunFam" id="3.40.50.300:FF:000033">
    <property type="entry name" value="26S protease regulatory subunit 6B"/>
    <property type="match status" value="1"/>
</dbReference>
<dbReference type="Gene3D" id="1.10.8.60">
    <property type="match status" value="1"/>
</dbReference>
<dbReference type="Gene3D" id="2.40.50.140">
    <property type="entry name" value="Nucleic acid-binding proteins"/>
    <property type="match status" value="1"/>
</dbReference>
<dbReference type="Gene3D" id="3.40.50.300">
    <property type="entry name" value="P-loop containing nucleotide triphosphate hydrolases"/>
    <property type="match status" value="1"/>
</dbReference>
<dbReference type="InterPro" id="IPR050221">
    <property type="entry name" value="26S_Proteasome_ATPase"/>
</dbReference>
<dbReference type="InterPro" id="IPR003593">
    <property type="entry name" value="AAA+_ATPase"/>
</dbReference>
<dbReference type="InterPro" id="IPR003959">
    <property type="entry name" value="ATPase_AAA_core"/>
</dbReference>
<dbReference type="InterPro" id="IPR003960">
    <property type="entry name" value="ATPase_AAA_CS"/>
</dbReference>
<dbReference type="InterPro" id="IPR012340">
    <property type="entry name" value="NA-bd_OB-fold"/>
</dbReference>
<dbReference type="InterPro" id="IPR027417">
    <property type="entry name" value="P-loop_NTPase"/>
</dbReference>
<dbReference type="InterPro" id="IPR032501">
    <property type="entry name" value="Prot_ATP_ID_OB_2nd"/>
</dbReference>
<dbReference type="PANTHER" id="PTHR23073">
    <property type="entry name" value="26S PROTEASOME REGULATORY SUBUNIT"/>
    <property type="match status" value="1"/>
</dbReference>
<dbReference type="Pfam" id="PF00004">
    <property type="entry name" value="AAA"/>
    <property type="match status" value="1"/>
</dbReference>
<dbReference type="Pfam" id="PF16450">
    <property type="entry name" value="Prot_ATP_ID_OB_C"/>
    <property type="match status" value="1"/>
</dbReference>
<dbReference type="SMART" id="SM00382">
    <property type="entry name" value="AAA"/>
    <property type="match status" value="1"/>
</dbReference>
<dbReference type="SUPFAM" id="SSF52540">
    <property type="entry name" value="P-loop containing nucleoside triphosphate hydrolases"/>
    <property type="match status" value="1"/>
</dbReference>
<dbReference type="PROSITE" id="PS00674">
    <property type="entry name" value="AAA"/>
    <property type="match status" value="1"/>
</dbReference>
<protein>
    <recommendedName>
        <fullName>26S proteasome regulatory subunit 6B homolog</fullName>
    </recommendedName>
    <alternativeName>
        <fullName>Protein YNT1</fullName>
    </alternativeName>
    <alternativeName>
        <fullName>Tat-binding homolog 2</fullName>
    </alternativeName>
</protein>
<sequence length="428" mass="47894">MEELGIVTPVEKAVEEKPAVKSYASLLAQLNGTVNNNSALSNVNSDIYFKLKKLEKEYELLTLQEDYIKDEQRHLKRELKRAQEEVKRIQSVPLVIGQFLEPIDQNTGIVSSTTGMSYVVRILSTLDRELLKPSMSVALHRHSNALVDILPPDSDSSISVMGENEKPDVTYADVGGLDMQKQEIREAVELPLVQADLYEQIGIDPPRGVLLYGPPGTGKTMLVKAVANSTKAAFIRVNGSEFVHKYLGEGPRMVRDVFRLARENAPSIIFIDEVDSIATKRFDAQTGSDREVQRILIELLTQMDGFDQSTNVKVIMATNRADTLDPALLRPGRLDRKIEFPSLRDRRERRLIFGTIASKMSLAPEADLDSLIIRNDSLSGAVIAAIMQEAGLRAVRKNRYVILQSDLEEAYATQVKTDNTVDKFDFYK</sequence>
<organism>
    <name type="scientific">Saccharomyces cerevisiae (strain ATCC 204508 / S288c)</name>
    <name type="common">Baker's yeast</name>
    <dbReference type="NCBI Taxonomy" id="559292"/>
    <lineage>
        <taxon>Eukaryota</taxon>
        <taxon>Fungi</taxon>
        <taxon>Dikarya</taxon>
        <taxon>Ascomycota</taxon>
        <taxon>Saccharomycotina</taxon>
        <taxon>Saccharomycetes</taxon>
        <taxon>Saccharomycetales</taxon>
        <taxon>Saccharomycetaceae</taxon>
        <taxon>Saccharomyces</taxon>
    </lineage>
</organism>
<name>PRS6B_YEAST</name>
<keyword id="KW-0002">3D-structure</keyword>
<keyword id="KW-0007">Acetylation</keyword>
<keyword id="KW-0067">ATP-binding</keyword>
<keyword id="KW-0963">Cytoplasm</keyword>
<keyword id="KW-0903">Direct protein sequencing</keyword>
<keyword id="KW-1017">Isopeptide bond</keyword>
<keyword id="KW-0547">Nucleotide-binding</keyword>
<keyword id="KW-0539">Nucleus</keyword>
<keyword id="KW-0647">Proteasome</keyword>
<keyword id="KW-1185">Reference proteome</keyword>
<keyword id="KW-0832">Ubl conjugation</keyword>
<accession>P33298</accession>
<accession>D6VT28</accession>
<proteinExistence type="evidence at protein level"/>
<evidence type="ECO:0000250" key="1"/>
<evidence type="ECO:0000255" key="2"/>
<evidence type="ECO:0000269" key="3">
    <source>
    </source>
</evidence>
<evidence type="ECO:0000305" key="4"/>
<evidence type="ECO:0007744" key="5">
    <source>
    </source>
</evidence>
<evidence type="ECO:0007829" key="6">
    <source>
        <dbReference type="PDB" id="2DZN"/>
    </source>
</evidence>
<evidence type="ECO:0007829" key="7">
    <source>
        <dbReference type="PDB" id="2DZO"/>
    </source>
</evidence>
<gene>
    <name type="primary">RPT3</name>
    <name type="synonym">YNT1</name>
    <name type="synonym">YTA2</name>
    <name type="ordered locus">YDR394W</name>
    <name type="ORF">D9509.14</name>
</gene>
<reference key="1">
    <citation type="journal article" date="1994" name="Yeast">
        <title>Identification of a set of yeast genes coding for a novel family of putative ATPases with high similarity to constituents of the 26S protease complex.</title>
        <authorList>
            <person name="Schnall R."/>
            <person name="Mannhaupt G."/>
            <person name="Stucka R."/>
            <person name="Tauer R."/>
            <person name="Ehnle S."/>
            <person name="Schwarzlose C."/>
            <person name="Vetter I."/>
            <person name="Feldmann H."/>
        </authorList>
    </citation>
    <scope>NUCLEOTIDE SEQUENCE [GENOMIC DNA]</scope>
    <source>
        <strain>C836</strain>
    </source>
</reference>
<reference key="2">
    <citation type="journal article" date="1994" name="Mol. Biol. Cell">
        <title>Mitochondrial morphological and functional defects in yeast caused by yme1 are suppressed by mutation of a 26S protease subunit homologue.</title>
        <authorList>
            <person name="Campbell C.L."/>
            <person name="Tanaka N."/>
            <person name="White K.H."/>
            <person name="Thorsness P.E."/>
        </authorList>
    </citation>
    <scope>NUCLEOTIDE SEQUENCE [GENOMIC DNA]</scope>
</reference>
<reference key="3">
    <citation type="journal article" date="1997" name="Nature">
        <title>The nucleotide sequence of Saccharomyces cerevisiae chromosome IV.</title>
        <authorList>
            <person name="Jacq C."/>
            <person name="Alt-Moerbe J."/>
            <person name="Andre B."/>
            <person name="Arnold W."/>
            <person name="Bahr A."/>
            <person name="Ballesta J.P.G."/>
            <person name="Bargues M."/>
            <person name="Baron L."/>
            <person name="Becker A."/>
            <person name="Biteau N."/>
            <person name="Bloecker H."/>
            <person name="Blugeon C."/>
            <person name="Boskovic J."/>
            <person name="Brandt P."/>
            <person name="Brueckner M."/>
            <person name="Buitrago M.J."/>
            <person name="Coster F."/>
            <person name="Delaveau T."/>
            <person name="del Rey F."/>
            <person name="Dujon B."/>
            <person name="Eide L.G."/>
            <person name="Garcia-Cantalejo J.M."/>
            <person name="Goffeau A."/>
            <person name="Gomez-Peris A."/>
            <person name="Granotier C."/>
            <person name="Hanemann V."/>
            <person name="Hankeln T."/>
            <person name="Hoheisel J.D."/>
            <person name="Jaeger W."/>
            <person name="Jimenez A."/>
            <person name="Jonniaux J.-L."/>
            <person name="Kraemer C."/>
            <person name="Kuester H."/>
            <person name="Laamanen P."/>
            <person name="Legros Y."/>
            <person name="Louis E.J."/>
            <person name="Moeller-Rieker S."/>
            <person name="Monnet A."/>
            <person name="Moro M."/>
            <person name="Mueller-Auer S."/>
            <person name="Nussbaumer B."/>
            <person name="Paricio N."/>
            <person name="Paulin L."/>
            <person name="Perea J."/>
            <person name="Perez-Alonso M."/>
            <person name="Perez-Ortin J.E."/>
            <person name="Pohl T.M."/>
            <person name="Prydz H."/>
            <person name="Purnelle B."/>
            <person name="Rasmussen S.W."/>
            <person name="Remacha M.A."/>
            <person name="Revuelta J.L."/>
            <person name="Rieger M."/>
            <person name="Salom D."/>
            <person name="Saluz H.P."/>
            <person name="Saiz J.E."/>
            <person name="Saren A.-M."/>
            <person name="Schaefer M."/>
            <person name="Scharfe M."/>
            <person name="Schmidt E.R."/>
            <person name="Schneider C."/>
            <person name="Scholler P."/>
            <person name="Schwarz S."/>
            <person name="Soler-Mira A."/>
            <person name="Urrestarazu L.A."/>
            <person name="Verhasselt P."/>
            <person name="Vissers S."/>
            <person name="Voet M."/>
            <person name="Volckaert G."/>
            <person name="Wagner G."/>
            <person name="Wambutt R."/>
            <person name="Wedler E."/>
            <person name="Wedler H."/>
            <person name="Woelfl S."/>
            <person name="Harris D.E."/>
            <person name="Bowman S."/>
            <person name="Brown D."/>
            <person name="Churcher C.M."/>
            <person name="Connor R."/>
            <person name="Dedman K."/>
            <person name="Gentles S."/>
            <person name="Hamlin N."/>
            <person name="Hunt S."/>
            <person name="Jones L."/>
            <person name="McDonald S."/>
            <person name="Murphy L.D."/>
            <person name="Niblett D."/>
            <person name="Odell C."/>
            <person name="Oliver K."/>
            <person name="Rajandream M.A."/>
            <person name="Richards C."/>
            <person name="Shore L."/>
            <person name="Walsh S.V."/>
            <person name="Barrell B.G."/>
            <person name="Dietrich F.S."/>
            <person name="Mulligan J.T."/>
            <person name="Allen E."/>
            <person name="Araujo R."/>
            <person name="Aviles E."/>
            <person name="Berno A."/>
            <person name="Carpenter J."/>
            <person name="Chen E."/>
            <person name="Cherry J.M."/>
            <person name="Chung E."/>
            <person name="Duncan M."/>
            <person name="Hunicke-Smith S."/>
            <person name="Hyman R.W."/>
            <person name="Komp C."/>
            <person name="Lashkari D."/>
            <person name="Lew H."/>
            <person name="Lin D."/>
            <person name="Mosedale D."/>
            <person name="Nakahara K."/>
            <person name="Namath A."/>
            <person name="Oefner P."/>
            <person name="Oh C."/>
            <person name="Petel F.X."/>
            <person name="Roberts D."/>
            <person name="Schramm S."/>
            <person name="Schroeder M."/>
            <person name="Shogren T."/>
            <person name="Shroff N."/>
            <person name="Winant A."/>
            <person name="Yelton M.A."/>
            <person name="Botstein D."/>
            <person name="Davis R.W."/>
            <person name="Johnston M."/>
            <person name="Andrews S."/>
            <person name="Brinkman R."/>
            <person name="Cooper J."/>
            <person name="Ding H."/>
            <person name="Du Z."/>
            <person name="Favello A."/>
            <person name="Fulton L."/>
            <person name="Gattung S."/>
            <person name="Greco T."/>
            <person name="Hallsworth K."/>
            <person name="Hawkins J."/>
            <person name="Hillier L.W."/>
            <person name="Jier M."/>
            <person name="Johnson D."/>
            <person name="Johnston L."/>
            <person name="Kirsten J."/>
            <person name="Kucaba T."/>
            <person name="Langston Y."/>
            <person name="Latreille P."/>
            <person name="Le T."/>
            <person name="Mardis E."/>
            <person name="Menezes S."/>
            <person name="Miller N."/>
            <person name="Nhan M."/>
            <person name="Pauley A."/>
            <person name="Peluso D."/>
            <person name="Rifkin L."/>
            <person name="Riles L."/>
            <person name="Taich A."/>
            <person name="Trevaskis E."/>
            <person name="Vignati D."/>
            <person name="Wilcox L."/>
            <person name="Wohldman P."/>
            <person name="Vaudin M."/>
            <person name="Wilson R."/>
            <person name="Waterston R."/>
            <person name="Albermann K."/>
            <person name="Hani J."/>
            <person name="Heumann K."/>
            <person name="Kleine K."/>
            <person name="Mewes H.-W."/>
            <person name="Zollner A."/>
            <person name="Zaccaria P."/>
        </authorList>
    </citation>
    <scope>NUCLEOTIDE SEQUENCE [LARGE SCALE GENOMIC DNA]</scope>
    <source>
        <strain>ATCC 204508 / S288c</strain>
    </source>
</reference>
<reference key="4">
    <citation type="journal article" date="2014" name="G3 (Bethesda)">
        <title>The reference genome sequence of Saccharomyces cerevisiae: Then and now.</title>
        <authorList>
            <person name="Engel S.R."/>
            <person name="Dietrich F.S."/>
            <person name="Fisk D.G."/>
            <person name="Binkley G."/>
            <person name="Balakrishnan R."/>
            <person name="Costanzo M.C."/>
            <person name="Dwight S.S."/>
            <person name="Hitz B.C."/>
            <person name="Karra K."/>
            <person name="Nash R.S."/>
            <person name="Weng S."/>
            <person name="Wong E.D."/>
            <person name="Lloyd P."/>
            <person name="Skrzypek M.S."/>
            <person name="Miyasato S.R."/>
            <person name="Simison M."/>
            <person name="Cherry J.M."/>
        </authorList>
    </citation>
    <scope>GENOME REANNOTATION</scope>
    <source>
        <strain>ATCC 204508 / S288c</strain>
    </source>
</reference>
<reference key="5">
    <citation type="journal article" date="2003" name="Arch. Biochem. Biophys.">
        <title>N-terminal modifications of the 19S regulatory particle subunits of the yeast proteasome.</title>
        <authorList>
            <person name="Kimura Y."/>
            <person name="Saeki Y."/>
            <person name="Yokosawa H."/>
            <person name="Polevoda B."/>
            <person name="Sherman F."/>
            <person name="Hirano H."/>
        </authorList>
    </citation>
    <scope>PROTEIN SEQUENCE OF 1-6</scope>
    <scope>ACETYLATION AT MET-1</scope>
</reference>
<reference key="6">
    <citation type="journal article" date="2012" name="Proteomics">
        <title>Sites of ubiquitin attachment in Saccharomyces cerevisiae.</title>
        <authorList>
            <person name="Starita L.M."/>
            <person name="Lo R.S."/>
            <person name="Eng J.K."/>
            <person name="von Haller P.D."/>
            <person name="Fields S."/>
        </authorList>
    </citation>
    <scope>UBIQUITINATION [LARGE SCALE ANALYSIS] AT LYS-280</scope>
    <scope>IDENTIFICATION BY MASS SPECTROMETRY [LARGE SCALE ANALYSIS]</scope>
</reference>
<reference key="7">
    <citation type="journal article" date="2012" name="Proc. Natl. Acad. Sci. U.S.A.">
        <title>Near-atomic resolution structural model of the yeast 26S proteasome.</title>
        <authorList>
            <person name="Beck F."/>
            <person name="Unverdorben P."/>
            <person name="Bohn S."/>
            <person name="Schweitzer A."/>
            <person name="Pfeifer G."/>
            <person name="Sakata E."/>
            <person name="Nickell S."/>
            <person name="Plitzko J.M."/>
            <person name="Villa E."/>
            <person name="Baumeister W."/>
            <person name="Forster F."/>
        </authorList>
    </citation>
    <scope>STRUCTURE BY ELECTRON MICROSCOPY (7.4 ANGSTROMS) OF THE 26S PROTEASOME</scope>
</reference>